<evidence type="ECO:0000255" key="1">
    <source>
        <dbReference type="HAMAP-Rule" id="MF_01316"/>
    </source>
</evidence>
<evidence type="ECO:0000305" key="2"/>
<protein>
    <recommendedName>
        <fullName evidence="1">Photosystem II reaction center protein I</fullName>
        <shortName evidence="1">PSII-I</shortName>
    </recommendedName>
    <alternativeName>
        <fullName evidence="1">PSII 4.4 kDa protein</fullName>
    </alternativeName>
</protein>
<comment type="function">
    <text evidence="1">One of the components of the core complex of photosystem II (PSII), required for its stability and/or assembly. PSII is a light-driven water:plastoquinone oxidoreductase that uses light energy to abstract electrons from H(2)O, generating O(2) and a proton gradient subsequently used for ATP formation. It consists of a core antenna complex that captures photons, and an electron transfer chain that converts photonic excitation into a charge separation.</text>
</comment>
<comment type="subunit">
    <text evidence="1">PSII is composed of 1 copy each of membrane proteins PsbA, PsbB, PsbC, PsbD, PsbE, PsbF, PsbH, PsbI, PsbJ, PsbK, PsbL, PsbM, PsbT, PsbX, PsbY, PsbZ, Psb30/Ycf12, peripheral proteins PsbO, CyanoQ (PsbQ), PsbU, PsbV and a large number of cofactors. It forms dimeric complexes.</text>
</comment>
<comment type="subcellular location">
    <subcellularLocation>
        <location evidence="1">Cellular thylakoid membrane</location>
        <topology evidence="1">Single-pass membrane protein</topology>
    </subcellularLocation>
</comment>
<comment type="similarity">
    <text evidence="1">Belongs to the PsbI family.</text>
</comment>
<comment type="sequence caution" evidence="2">
    <conflict type="erroneous initiation">
        <sequence resource="EMBL-CDS" id="ACB52742"/>
    </conflict>
    <text>Extended N-terminus.</text>
</comment>
<name>PSBI_CROS5</name>
<feature type="chain" id="PRO_0000353214" description="Photosystem II reaction center protein I">
    <location>
        <begin position="1"/>
        <end position="38"/>
    </location>
</feature>
<feature type="transmembrane region" description="Helical" evidence="1">
    <location>
        <begin position="6"/>
        <end position="26"/>
    </location>
</feature>
<proteinExistence type="inferred from homology"/>
<organism>
    <name type="scientific">Crocosphaera subtropica (strain ATCC 51142 / BH68)</name>
    <name type="common">Cyanothece sp. (strain ATCC 51142)</name>
    <dbReference type="NCBI Taxonomy" id="43989"/>
    <lineage>
        <taxon>Bacteria</taxon>
        <taxon>Bacillati</taxon>
        <taxon>Cyanobacteriota</taxon>
        <taxon>Cyanophyceae</taxon>
        <taxon>Oscillatoriophycideae</taxon>
        <taxon>Chroococcales</taxon>
        <taxon>Aphanothecaceae</taxon>
        <taxon>Crocosphaera</taxon>
        <taxon>Crocosphaera subtropica</taxon>
    </lineage>
</organism>
<accession>B1WYX8</accession>
<sequence>MLTLKIAVYIVVAFFISLFVFGFLSSDPTRNPGRKDFE</sequence>
<keyword id="KW-0472">Membrane</keyword>
<keyword id="KW-0602">Photosynthesis</keyword>
<keyword id="KW-0604">Photosystem II</keyword>
<keyword id="KW-0674">Reaction center</keyword>
<keyword id="KW-1185">Reference proteome</keyword>
<keyword id="KW-0793">Thylakoid</keyword>
<keyword id="KW-0812">Transmembrane</keyword>
<keyword id="KW-1133">Transmembrane helix</keyword>
<gene>
    <name evidence="1" type="primary">psbI</name>
    <name type="ordered locus">cce_3394</name>
</gene>
<reference key="1">
    <citation type="journal article" date="2008" name="Proc. Natl. Acad. Sci. U.S.A.">
        <title>The genome of Cyanothece 51142, a unicellular diazotrophic cyanobacterium important in the marine nitrogen cycle.</title>
        <authorList>
            <person name="Welsh E.A."/>
            <person name="Liberton M."/>
            <person name="Stoeckel J."/>
            <person name="Loh T."/>
            <person name="Elvitigala T."/>
            <person name="Wang C."/>
            <person name="Wollam A."/>
            <person name="Fulton R.S."/>
            <person name="Clifton S.W."/>
            <person name="Jacobs J.M."/>
            <person name="Aurora R."/>
            <person name="Ghosh B.K."/>
            <person name="Sherman L.A."/>
            <person name="Smith R.D."/>
            <person name="Wilson R.K."/>
            <person name="Pakrasi H.B."/>
        </authorList>
    </citation>
    <scope>NUCLEOTIDE SEQUENCE [LARGE SCALE GENOMIC DNA]</scope>
    <source>
        <strain>ATCC 51142 / BH68</strain>
    </source>
</reference>
<dbReference type="EMBL" id="CP000806">
    <property type="protein sequence ID" value="ACB52742.1"/>
    <property type="status" value="ALT_INIT"/>
    <property type="molecule type" value="Genomic_DNA"/>
</dbReference>
<dbReference type="RefSeq" id="WP_008276509.1">
    <property type="nucleotide sequence ID" value="NC_010546.1"/>
</dbReference>
<dbReference type="SMR" id="B1WYX8"/>
<dbReference type="STRING" id="43989.cce_3394"/>
<dbReference type="KEGG" id="cyt:cce_3394"/>
<dbReference type="eggNOG" id="ENOG5033CII">
    <property type="taxonomic scope" value="Bacteria"/>
</dbReference>
<dbReference type="HOGENOM" id="CLU_212150_0_0_3"/>
<dbReference type="OrthoDB" id="467250at2"/>
<dbReference type="Proteomes" id="UP000001203">
    <property type="component" value="Chromosome circular"/>
</dbReference>
<dbReference type="GO" id="GO:0009539">
    <property type="term" value="C:photosystem II reaction center"/>
    <property type="evidence" value="ECO:0007669"/>
    <property type="project" value="InterPro"/>
</dbReference>
<dbReference type="GO" id="GO:0031676">
    <property type="term" value="C:plasma membrane-derived thylakoid membrane"/>
    <property type="evidence" value="ECO:0007669"/>
    <property type="project" value="UniProtKB-SubCell"/>
</dbReference>
<dbReference type="GO" id="GO:0015979">
    <property type="term" value="P:photosynthesis"/>
    <property type="evidence" value="ECO:0007669"/>
    <property type="project" value="UniProtKB-UniRule"/>
</dbReference>
<dbReference type="HAMAP" id="MF_01316">
    <property type="entry name" value="PSII_PsbI"/>
    <property type="match status" value="1"/>
</dbReference>
<dbReference type="InterPro" id="IPR003686">
    <property type="entry name" value="PSII_PsbI"/>
</dbReference>
<dbReference type="InterPro" id="IPR037271">
    <property type="entry name" value="PSII_PsbI_sf"/>
</dbReference>
<dbReference type="NCBIfam" id="NF002735">
    <property type="entry name" value="PRK02655.1"/>
    <property type="match status" value="1"/>
</dbReference>
<dbReference type="PANTHER" id="PTHR35772">
    <property type="entry name" value="PHOTOSYSTEM II REACTION CENTER PROTEIN I"/>
    <property type="match status" value="1"/>
</dbReference>
<dbReference type="PANTHER" id="PTHR35772:SF1">
    <property type="entry name" value="PHOTOSYSTEM II REACTION CENTER PROTEIN I"/>
    <property type="match status" value="1"/>
</dbReference>
<dbReference type="Pfam" id="PF02532">
    <property type="entry name" value="PsbI"/>
    <property type="match status" value="1"/>
</dbReference>
<dbReference type="SUPFAM" id="SSF161041">
    <property type="entry name" value="Photosystem II reaction center protein I, PsbI"/>
    <property type="match status" value="1"/>
</dbReference>